<dbReference type="EMBL" id="AE014297">
    <property type="protein sequence ID" value="AAF56326.1"/>
    <property type="molecule type" value="Genomic_DNA"/>
</dbReference>
<dbReference type="EMBL" id="AY119184">
    <property type="protein sequence ID" value="AAM51044.1"/>
    <property type="molecule type" value="mRNA"/>
</dbReference>
<dbReference type="RefSeq" id="NP_651280.1">
    <property type="nucleotide sequence ID" value="NM_143023.2"/>
</dbReference>
<dbReference type="PDB" id="9MU9">
    <property type="method" value="EM"/>
    <property type="resolution" value="7.80 A"/>
    <property type="chains" value="J=1-67"/>
</dbReference>
<dbReference type="PDBsum" id="9MU9"/>
<dbReference type="EMDB" id="EMD-48626"/>
<dbReference type="SMR" id="Q9VC49"/>
<dbReference type="BioGRID" id="67867">
    <property type="interactions" value="5"/>
</dbReference>
<dbReference type="ComplexPortal" id="CPX-2602">
    <property type="entry name" value="DNA-directed RNA polymerase I complex"/>
</dbReference>
<dbReference type="ComplexPortal" id="CPX-2625">
    <property type="entry name" value="DNA-directed RNA polymerase II complex"/>
</dbReference>
<dbReference type="ComplexPortal" id="CPX-2628">
    <property type="entry name" value="DNA-directed RNA polymerase III complex"/>
</dbReference>
<dbReference type="DIP" id="DIP-21381N"/>
<dbReference type="FunCoup" id="Q9VC49">
    <property type="interactions" value="615"/>
</dbReference>
<dbReference type="IntAct" id="Q9VC49">
    <property type="interactions" value="3"/>
</dbReference>
<dbReference type="STRING" id="7227.FBpp0084067"/>
<dbReference type="PaxDb" id="7227-FBpp0084067"/>
<dbReference type="DNASU" id="42942"/>
<dbReference type="EnsemblMetazoa" id="FBtr0084688">
    <property type="protein sequence ID" value="FBpp0084067"/>
    <property type="gene ID" value="FBgn0039218"/>
</dbReference>
<dbReference type="GeneID" id="42942"/>
<dbReference type="KEGG" id="dme:Dmel_CG13628"/>
<dbReference type="UCSC" id="CG13628-RA">
    <property type="organism name" value="d. melanogaster"/>
</dbReference>
<dbReference type="AGR" id="FB:FBgn0039218"/>
<dbReference type="CTD" id="5441"/>
<dbReference type="FlyBase" id="FBgn0039218">
    <property type="gene designation" value="Polr2L"/>
</dbReference>
<dbReference type="VEuPathDB" id="VectorBase:FBgn0039218"/>
<dbReference type="eggNOG" id="KOG3497">
    <property type="taxonomic scope" value="Eukaryota"/>
</dbReference>
<dbReference type="GeneTree" id="ENSGT00390000007087"/>
<dbReference type="HOGENOM" id="CLU_143122_1_1_1"/>
<dbReference type="InParanoid" id="Q9VC49"/>
<dbReference type="OMA" id="YCCRRMF"/>
<dbReference type="OrthoDB" id="10258858at2759"/>
<dbReference type="PhylomeDB" id="Q9VC49"/>
<dbReference type="Reactome" id="R-DME-112382">
    <property type="pathway name" value="Formation of RNA Pol II elongation complex"/>
</dbReference>
<dbReference type="Reactome" id="R-DME-113418">
    <property type="pathway name" value="Formation of the Early Elongation Complex"/>
</dbReference>
<dbReference type="Reactome" id="R-DME-5578749">
    <property type="pathway name" value="Transcriptional regulation by small RNAs"/>
</dbReference>
<dbReference type="Reactome" id="R-DME-674695">
    <property type="pathway name" value="RNA Polymerase II Pre-transcription Events"/>
</dbReference>
<dbReference type="Reactome" id="R-DME-6781823">
    <property type="pathway name" value="Formation of TC-NER Pre-Incision Complex"/>
</dbReference>
<dbReference type="Reactome" id="R-DME-6782135">
    <property type="pathway name" value="Dual incision in TC-NER"/>
</dbReference>
<dbReference type="Reactome" id="R-DME-6782210">
    <property type="pathway name" value="Gap-filling DNA repair synthesis and ligation in TC-NER"/>
</dbReference>
<dbReference type="Reactome" id="R-DME-6796648">
    <property type="pathway name" value="TP53 Regulates Transcription of DNA Repair Genes"/>
</dbReference>
<dbReference type="Reactome" id="R-DME-6807505">
    <property type="pathway name" value="RNA polymerase II transcribes snRNA genes"/>
</dbReference>
<dbReference type="Reactome" id="R-DME-72086">
    <property type="pathway name" value="mRNA Capping"/>
</dbReference>
<dbReference type="Reactome" id="R-DME-72163">
    <property type="pathway name" value="mRNA Splicing - Major Pathway"/>
</dbReference>
<dbReference type="Reactome" id="R-DME-72165">
    <property type="pathway name" value="mRNA Splicing - Minor Pathway"/>
</dbReference>
<dbReference type="Reactome" id="R-DME-72203">
    <property type="pathway name" value="Processing of Capped Intron-Containing Pre-mRNA"/>
</dbReference>
<dbReference type="Reactome" id="R-DME-73762">
    <property type="pathway name" value="RNA Polymerase I Transcription Initiation"/>
</dbReference>
<dbReference type="Reactome" id="R-DME-73772">
    <property type="pathway name" value="RNA Polymerase I Promoter Escape"/>
</dbReference>
<dbReference type="Reactome" id="R-DME-73776">
    <property type="pathway name" value="RNA Polymerase II Promoter Escape"/>
</dbReference>
<dbReference type="Reactome" id="R-DME-73779">
    <property type="pathway name" value="RNA Polymerase II Transcription Pre-Initiation And Promoter Opening"/>
</dbReference>
<dbReference type="Reactome" id="R-DME-75953">
    <property type="pathway name" value="RNA Polymerase II Transcription Initiation"/>
</dbReference>
<dbReference type="Reactome" id="R-DME-75955">
    <property type="pathway name" value="RNA Polymerase II Transcription Elongation"/>
</dbReference>
<dbReference type="Reactome" id="R-DME-76042">
    <property type="pathway name" value="RNA Polymerase II Transcription Initiation And Promoter Clearance"/>
</dbReference>
<dbReference type="Reactome" id="R-DME-76061">
    <property type="pathway name" value="RNA Polymerase III Transcription Initiation From Type 1 Promoter"/>
</dbReference>
<dbReference type="Reactome" id="R-DME-76066">
    <property type="pathway name" value="RNA Polymerase III Transcription Initiation From Type 2 Promoter"/>
</dbReference>
<dbReference type="Reactome" id="R-DME-77075">
    <property type="pathway name" value="RNA Pol II CTD phosphorylation and interaction with CE"/>
</dbReference>
<dbReference type="Reactome" id="R-DME-9018519">
    <property type="pathway name" value="Estrogen-dependent gene expression"/>
</dbReference>
<dbReference type="BioGRID-ORCS" id="42942">
    <property type="hits" value="0 hits in 1 CRISPR screen"/>
</dbReference>
<dbReference type="GenomeRNAi" id="42942"/>
<dbReference type="PRO" id="PR:Q9VC49"/>
<dbReference type="Proteomes" id="UP000000803">
    <property type="component" value="Chromosome 3R"/>
</dbReference>
<dbReference type="Bgee" id="FBgn0039218">
    <property type="expression patterns" value="Expressed in adult class III enteroendocrine cell in adult midgut (Drosophila) and 131 other cell types or tissues"/>
</dbReference>
<dbReference type="ExpressionAtlas" id="Q9VC49">
    <property type="expression patterns" value="baseline and differential"/>
</dbReference>
<dbReference type="GO" id="GO:0005736">
    <property type="term" value="C:RNA polymerase I complex"/>
    <property type="evidence" value="ECO:0000250"/>
    <property type="project" value="FlyBase"/>
</dbReference>
<dbReference type="GO" id="GO:0005665">
    <property type="term" value="C:RNA polymerase II, core complex"/>
    <property type="evidence" value="ECO:0000250"/>
    <property type="project" value="FlyBase"/>
</dbReference>
<dbReference type="GO" id="GO:0005666">
    <property type="term" value="C:RNA polymerase III complex"/>
    <property type="evidence" value="ECO:0000250"/>
    <property type="project" value="FlyBase"/>
</dbReference>
<dbReference type="GO" id="GO:0003677">
    <property type="term" value="F:DNA binding"/>
    <property type="evidence" value="ECO:0007669"/>
    <property type="project" value="InterPro"/>
</dbReference>
<dbReference type="GO" id="GO:0003899">
    <property type="term" value="F:DNA-directed RNA polymerase activity"/>
    <property type="evidence" value="ECO:0007669"/>
    <property type="project" value="InterPro"/>
</dbReference>
<dbReference type="GO" id="GO:0008270">
    <property type="term" value="F:zinc ion binding"/>
    <property type="evidence" value="ECO:0000318"/>
    <property type="project" value="GO_Central"/>
</dbReference>
<dbReference type="GO" id="GO:0006360">
    <property type="term" value="P:transcription by RNA polymerase I"/>
    <property type="evidence" value="ECO:0000250"/>
    <property type="project" value="FlyBase"/>
</dbReference>
<dbReference type="GO" id="GO:0006366">
    <property type="term" value="P:transcription by RNA polymerase II"/>
    <property type="evidence" value="ECO:0000250"/>
    <property type="project" value="FlyBase"/>
</dbReference>
<dbReference type="GO" id="GO:0042797">
    <property type="term" value="P:tRNA transcription by RNA polymerase III"/>
    <property type="evidence" value="ECO:0000250"/>
    <property type="project" value="FlyBase"/>
</dbReference>
<dbReference type="FunFam" id="1.10.10.60:FF:000024">
    <property type="entry name" value="DNA-directed RNA polymerases I, II, and III subunit"/>
    <property type="match status" value="1"/>
</dbReference>
<dbReference type="Gene3D" id="1.10.10.60">
    <property type="entry name" value="Homeodomain-like"/>
    <property type="match status" value="1"/>
</dbReference>
<dbReference type="HAMAP" id="MF_00250">
    <property type="entry name" value="RNApol_arch_Rpo10"/>
    <property type="match status" value="1"/>
</dbReference>
<dbReference type="InterPro" id="IPR023580">
    <property type="entry name" value="RNA_pol_su_RPB10"/>
</dbReference>
<dbReference type="InterPro" id="IPR020789">
    <property type="entry name" value="RNA_pol_suN_Zn-BS"/>
</dbReference>
<dbReference type="InterPro" id="IPR000268">
    <property type="entry name" value="RPABC5/Rpb10"/>
</dbReference>
<dbReference type="NCBIfam" id="NF003089">
    <property type="entry name" value="PRK04016.1"/>
    <property type="match status" value="1"/>
</dbReference>
<dbReference type="PANTHER" id="PTHR23431:SF3">
    <property type="entry name" value="DNA-DIRECTED RNA POLYMERASES I, II, AND III SUBUNIT RPABC5"/>
    <property type="match status" value="1"/>
</dbReference>
<dbReference type="PANTHER" id="PTHR23431">
    <property type="entry name" value="DNA-DIRECTED RNA POLYMERASES I, II, AND III SUBUNIT RPABC5 FAMILY MEMBER"/>
    <property type="match status" value="1"/>
</dbReference>
<dbReference type="Pfam" id="PF01194">
    <property type="entry name" value="RNA_pol_N"/>
    <property type="match status" value="1"/>
</dbReference>
<dbReference type="PIRSF" id="PIRSF005653">
    <property type="entry name" value="RNA_pol_N/8_sub"/>
    <property type="match status" value="1"/>
</dbReference>
<dbReference type="SUPFAM" id="SSF46924">
    <property type="entry name" value="RNA polymerase subunit RPB10"/>
    <property type="match status" value="1"/>
</dbReference>
<dbReference type="PROSITE" id="PS01112">
    <property type="entry name" value="RNA_POL_N_8KD"/>
    <property type="match status" value="1"/>
</dbReference>
<keyword id="KW-0002">3D-structure</keyword>
<keyword id="KW-0240">DNA-directed RNA polymerase</keyword>
<keyword id="KW-0479">Metal-binding</keyword>
<keyword id="KW-0539">Nucleus</keyword>
<keyword id="KW-1185">Reference proteome</keyword>
<keyword id="KW-0804">Transcription</keyword>
<keyword id="KW-0862">Zinc</keyword>
<protein>
    <recommendedName>
        <fullName>DNA-directed RNA polymerases I, II, and III subunit RPABC5</fullName>
        <shortName>RNA polymerases I, II, and III subunit ABC5</shortName>
    </recommendedName>
    <alternativeName>
        <fullName evidence="3">RNA polymerase II, I and III subunit L</fullName>
    </alternativeName>
    <alternativeName>
        <fullName>RPB10 homolog</fullName>
    </alternativeName>
</protein>
<organism>
    <name type="scientific">Drosophila melanogaster</name>
    <name type="common">Fruit fly</name>
    <dbReference type="NCBI Taxonomy" id="7227"/>
    <lineage>
        <taxon>Eukaryota</taxon>
        <taxon>Metazoa</taxon>
        <taxon>Ecdysozoa</taxon>
        <taxon>Arthropoda</taxon>
        <taxon>Hexapoda</taxon>
        <taxon>Insecta</taxon>
        <taxon>Pterygota</taxon>
        <taxon>Neoptera</taxon>
        <taxon>Endopterygota</taxon>
        <taxon>Diptera</taxon>
        <taxon>Brachycera</taxon>
        <taxon>Muscomorpha</taxon>
        <taxon>Ephydroidea</taxon>
        <taxon>Drosophilidae</taxon>
        <taxon>Drosophila</taxon>
        <taxon>Sophophora</taxon>
    </lineage>
</organism>
<gene>
    <name evidence="3" type="primary">Polr2L</name>
    <name evidence="3" type="synonym">Rpb10</name>
    <name evidence="3" type="ORF">CG13628</name>
</gene>
<reference key="1">
    <citation type="journal article" date="2000" name="Science">
        <title>The genome sequence of Drosophila melanogaster.</title>
        <authorList>
            <person name="Adams M.D."/>
            <person name="Celniker S.E."/>
            <person name="Holt R.A."/>
            <person name="Evans C.A."/>
            <person name="Gocayne J.D."/>
            <person name="Amanatides P.G."/>
            <person name="Scherer S.E."/>
            <person name="Li P.W."/>
            <person name="Hoskins R.A."/>
            <person name="Galle R.F."/>
            <person name="George R.A."/>
            <person name="Lewis S.E."/>
            <person name="Richards S."/>
            <person name="Ashburner M."/>
            <person name="Henderson S.N."/>
            <person name="Sutton G.G."/>
            <person name="Wortman J.R."/>
            <person name="Yandell M.D."/>
            <person name="Zhang Q."/>
            <person name="Chen L.X."/>
            <person name="Brandon R.C."/>
            <person name="Rogers Y.-H.C."/>
            <person name="Blazej R.G."/>
            <person name="Champe M."/>
            <person name="Pfeiffer B.D."/>
            <person name="Wan K.H."/>
            <person name="Doyle C."/>
            <person name="Baxter E.G."/>
            <person name="Helt G."/>
            <person name="Nelson C.R."/>
            <person name="Miklos G.L.G."/>
            <person name="Abril J.F."/>
            <person name="Agbayani A."/>
            <person name="An H.-J."/>
            <person name="Andrews-Pfannkoch C."/>
            <person name="Baldwin D."/>
            <person name="Ballew R.M."/>
            <person name="Basu A."/>
            <person name="Baxendale J."/>
            <person name="Bayraktaroglu L."/>
            <person name="Beasley E.M."/>
            <person name="Beeson K.Y."/>
            <person name="Benos P.V."/>
            <person name="Berman B.P."/>
            <person name="Bhandari D."/>
            <person name="Bolshakov S."/>
            <person name="Borkova D."/>
            <person name="Botchan M.R."/>
            <person name="Bouck J."/>
            <person name="Brokstein P."/>
            <person name="Brottier P."/>
            <person name="Burtis K.C."/>
            <person name="Busam D.A."/>
            <person name="Butler H."/>
            <person name="Cadieu E."/>
            <person name="Center A."/>
            <person name="Chandra I."/>
            <person name="Cherry J.M."/>
            <person name="Cawley S."/>
            <person name="Dahlke C."/>
            <person name="Davenport L.B."/>
            <person name="Davies P."/>
            <person name="de Pablos B."/>
            <person name="Delcher A."/>
            <person name="Deng Z."/>
            <person name="Mays A.D."/>
            <person name="Dew I."/>
            <person name="Dietz S.M."/>
            <person name="Dodson K."/>
            <person name="Doup L.E."/>
            <person name="Downes M."/>
            <person name="Dugan-Rocha S."/>
            <person name="Dunkov B.C."/>
            <person name="Dunn P."/>
            <person name="Durbin K.J."/>
            <person name="Evangelista C.C."/>
            <person name="Ferraz C."/>
            <person name="Ferriera S."/>
            <person name="Fleischmann W."/>
            <person name="Fosler C."/>
            <person name="Gabrielian A.E."/>
            <person name="Garg N.S."/>
            <person name="Gelbart W.M."/>
            <person name="Glasser K."/>
            <person name="Glodek A."/>
            <person name="Gong F."/>
            <person name="Gorrell J.H."/>
            <person name="Gu Z."/>
            <person name="Guan P."/>
            <person name="Harris M."/>
            <person name="Harris N.L."/>
            <person name="Harvey D.A."/>
            <person name="Heiman T.J."/>
            <person name="Hernandez J.R."/>
            <person name="Houck J."/>
            <person name="Hostin D."/>
            <person name="Houston K.A."/>
            <person name="Howland T.J."/>
            <person name="Wei M.-H."/>
            <person name="Ibegwam C."/>
            <person name="Jalali M."/>
            <person name="Kalush F."/>
            <person name="Karpen G.H."/>
            <person name="Ke Z."/>
            <person name="Kennison J.A."/>
            <person name="Ketchum K.A."/>
            <person name="Kimmel B.E."/>
            <person name="Kodira C.D."/>
            <person name="Kraft C.L."/>
            <person name="Kravitz S."/>
            <person name="Kulp D."/>
            <person name="Lai Z."/>
            <person name="Lasko P."/>
            <person name="Lei Y."/>
            <person name="Levitsky A.A."/>
            <person name="Li J.H."/>
            <person name="Li Z."/>
            <person name="Liang Y."/>
            <person name="Lin X."/>
            <person name="Liu X."/>
            <person name="Mattei B."/>
            <person name="McIntosh T.C."/>
            <person name="McLeod M.P."/>
            <person name="McPherson D."/>
            <person name="Merkulov G."/>
            <person name="Milshina N.V."/>
            <person name="Mobarry C."/>
            <person name="Morris J."/>
            <person name="Moshrefi A."/>
            <person name="Mount S.M."/>
            <person name="Moy M."/>
            <person name="Murphy B."/>
            <person name="Murphy L."/>
            <person name="Muzny D.M."/>
            <person name="Nelson D.L."/>
            <person name="Nelson D.R."/>
            <person name="Nelson K.A."/>
            <person name="Nixon K."/>
            <person name="Nusskern D.R."/>
            <person name="Pacleb J.M."/>
            <person name="Palazzolo M."/>
            <person name="Pittman G.S."/>
            <person name="Pan S."/>
            <person name="Pollard J."/>
            <person name="Puri V."/>
            <person name="Reese M.G."/>
            <person name="Reinert K."/>
            <person name="Remington K."/>
            <person name="Saunders R.D.C."/>
            <person name="Scheeler F."/>
            <person name="Shen H."/>
            <person name="Shue B.C."/>
            <person name="Siden-Kiamos I."/>
            <person name="Simpson M."/>
            <person name="Skupski M.P."/>
            <person name="Smith T.J."/>
            <person name="Spier E."/>
            <person name="Spradling A.C."/>
            <person name="Stapleton M."/>
            <person name="Strong R."/>
            <person name="Sun E."/>
            <person name="Svirskas R."/>
            <person name="Tector C."/>
            <person name="Turner R."/>
            <person name="Venter E."/>
            <person name="Wang A.H."/>
            <person name="Wang X."/>
            <person name="Wang Z.-Y."/>
            <person name="Wassarman D.A."/>
            <person name="Weinstock G.M."/>
            <person name="Weissenbach J."/>
            <person name="Williams S.M."/>
            <person name="Woodage T."/>
            <person name="Worley K.C."/>
            <person name="Wu D."/>
            <person name="Yang S."/>
            <person name="Yao Q.A."/>
            <person name="Ye J."/>
            <person name="Yeh R.-F."/>
            <person name="Zaveri J.S."/>
            <person name="Zhan M."/>
            <person name="Zhang G."/>
            <person name="Zhao Q."/>
            <person name="Zheng L."/>
            <person name="Zheng X.H."/>
            <person name="Zhong F.N."/>
            <person name="Zhong W."/>
            <person name="Zhou X."/>
            <person name="Zhu S.C."/>
            <person name="Zhu X."/>
            <person name="Smith H.O."/>
            <person name="Gibbs R.A."/>
            <person name="Myers E.W."/>
            <person name="Rubin G.M."/>
            <person name="Venter J.C."/>
        </authorList>
    </citation>
    <scope>NUCLEOTIDE SEQUENCE [LARGE SCALE GENOMIC DNA]</scope>
    <source>
        <strain>Berkeley</strain>
    </source>
</reference>
<reference key="2">
    <citation type="journal article" date="2002" name="Genome Biol.">
        <title>Annotation of the Drosophila melanogaster euchromatic genome: a systematic review.</title>
        <authorList>
            <person name="Misra S."/>
            <person name="Crosby M.A."/>
            <person name="Mungall C.J."/>
            <person name="Matthews B.B."/>
            <person name="Campbell K.S."/>
            <person name="Hradecky P."/>
            <person name="Huang Y."/>
            <person name="Kaminker J.S."/>
            <person name="Millburn G.H."/>
            <person name="Prochnik S.E."/>
            <person name="Smith C.D."/>
            <person name="Tupy J.L."/>
            <person name="Whitfield E.J."/>
            <person name="Bayraktaroglu L."/>
            <person name="Berman B.P."/>
            <person name="Bettencourt B.R."/>
            <person name="Celniker S.E."/>
            <person name="de Grey A.D.N.J."/>
            <person name="Drysdale R.A."/>
            <person name="Harris N.L."/>
            <person name="Richter J."/>
            <person name="Russo S."/>
            <person name="Schroeder A.J."/>
            <person name="Shu S.Q."/>
            <person name="Stapleton M."/>
            <person name="Yamada C."/>
            <person name="Ashburner M."/>
            <person name="Gelbart W.M."/>
            <person name="Rubin G.M."/>
            <person name="Lewis S.E."/>
        </authorList>
    </citation>
    <scope>GENOME REANNOTATION</scope>
    <source>
        <strain>Berkeley</strain>
    </source>
</reference>
<reference key="3">
    <citation type="journal article" date="2002" name="Genome Biol.">
        <title>A Drosophila full-length cDNA resource.</title>
        <authorList>
            <person name="Stapleton M."/>
            <person name="Carlson J.W."/>
            <person name="Brokstein P."/>
            <person name="Yu C."/>
            <person name="Champe M."/>
            <person name="George R.A."/>
            <person name="Guarin H."/>
            <person name="Kronmiller B."/>
            <person name="Pacleb J.M."/>
            <person name="Park S."/>
            <person name="Wan K.H."/>
            <person name="Rubin G.M."/>
            <person name="Celniker S.E."/>
        </authorList>
    </citation>
    <scope>NUCLEOTIDE SEQUENCE [LARGE SCALE MRNA]</scope>
    <source>
        <strain>Berkeley</strain>
        <tissue>Embryo</tissue>
    </source>
</reference>
<feature type="chain" id="PRO_0000121336" description="DNA-directed RNA polymerases I, II, and III subunit RPABC5">
    <location>
        <begin position="1"/>
        <end position="67"/>
    </location>
</feature>
<feature type="binding site" evidence="1">
    <location>
        <position position="7"/>
    </location>
    <ligand>
        <name>Zn(2+)</name>
        <dbReference type="ChEBI" id="CHEBI:29105"/>
    </ligand>
</feature>
<feature type="binding site" evidence="1">
    <location>
        <position position="10"/>
    </location>
    <ligand>
        <name>Zn(2+)</name>
        <dbReference type="ChEBI" id="CHEBI:29105"/>
    </ligand>
</feature>
<feature type="binding site" evidence="1">
    <location>
        <position position="44"/>
    </location>
    <ligand>
        <name>Zn(2+)</name>
        <dbReference type="ChEBI" id="CHEBI:29105"/>
    </ligand>
</feature>
<feature type="binding site" evidence="1">
    <location>
        <position position="45"/>
    </location>
    <ligand>
        <name>Zn(2+)</name>
        <dbReference type="ChEBI" id="CHEBI:29105"/>
    </ligand>
</feature>
<sequence>MIIPIRCFTCGKVIGNKWESYLGLLQAEYTEGDALDALGLKRYCCRRMLLGHVDLIEKLLNYAPLEK</sequence>
<comment type="function">
    <text evidence="1">DNA-dependent RNA polymerase catalyzes the transcription of DNA into RNA using the four ribonucleoside triphosphates as substrates. Common component of RNA polymerases I, II and III which synthesize ribosomal RNA precursors, mRNA precursors and many functional non-coding RNAs, and a small RNAs, such as 5S rRNA and tRNAs, respectively. Pol II is the central component of the basal RNA polymerase II transcription machinery. Pols are composed of mobile elements that move relative to each other. In Pol II, Polr2L is part of the core element with the central large cleft (By similarity).</text>
</comment>
<comment type="subunit">
    <text evidence="1">Component of the RNA polymerase I (Pol I), RNA polymerase II (Pol II) and RNA polymerase III (Pol III) complexes consisting of at least 13, 12 and 17 subunits, respectively.</text>
</comment>
<comment type="subcellular location">
    <subcellularLocation>
        <location evidence="1">Nucleus</location>
    </subcellularLocation>
</comment>
<comment type="similarity">
    <text evidence="2">Belongs to the archaeal Rpo10/eukaryotic RPB10 RNA polymerase subunit family.</text>
</comment>
<proteinExistence type="evidence at protein level"/>
<name>RPAB5_DROME</name>
<accession>Q9VC49</accession>
<evidence type="ECO:0000250" key="1"/>
<evidence type="ECO:0000305" key="2"/>
<evidence type="ECO:0000312" key="3">
    <source>
        <dbReference type="FlyBase" id="FBgn0039218"/>
    </source>
</evidence>